<reference key="1">
    <citation type="journal article" date="2012" name="BMC Genomics">
        <title>Comparative genomics and transcriptomics of lineages I, II, and III strains of Listeria monocytogenes.</title>
        <authorList>
            <person name="Hain T."/>
            <person name="Ghai R."/>
            <person name="Billion A."/>
            <person name="Kuenne C.T."/>
            <person name="Steinweg C."/>
            <person name="Izar B."/>
            <person name="Mohamed W."/>
            <person name="Mraheil M."/>
            <person name="Domann E."/>
            <person name="Schaffrath S."/>
            <person name="Karst U."/>
            <person name="Goesmann A."/>
            <person name="Oehm S."/>
            <person name="Puhler A."/>
            <person name="Merkl R."/>
            <person name="Vorwerk S."/>
            <person name="Glaser P."/>
            <person name="Garrido P."/>
            <person name="Rusniok C."/>
            <person name="Buchrieser C."/>
            <person name="Goebel W."/>
            <person name="Chakraborty T."/>
        </authorList>
    </citation>
    <scope>NUCLEOTIDE SEQUENCE [LARGE SCALE GENOMIC DNA]</scope>
    <source>
        <strain>CLIP80459</strain>
    </source>
</reference>
<comment type="subunit">
    <text evidence="1">Part of the 50S ribosomal subunit.</text>
</comment>
<comment type="similarity">
    <text evidence="1">Belongs to the universal ribosomal protein uL30 family.</text>
</comment>
<keyword id="KW-0687">Ribonucleoprotein</keyword>
<keyword id="KW-0689">Ribosomal protein</keyword>
<dbReference type="EMBL" id="FM242711">
    <property type="protein sequence ID" value="CAS06335.1"/>
    <property type="molecule type" value="Genomic_DNA"/>
</dbReference>
<dbReference type="RefSeq" id="WP_003720933.1">
    <property type="nucleotide sequence ID" value="NC_012488.1"/>
</dbReference>
<dbReference type="SMR" id="C1KZG2"/>
<dbReference type="GeneID" id="93240495"/>
<dbReference type="KEGG" id="lmc:Lm4b_02581"/>
<dbReference type="HOGENOM" id="CLU_131047_2_1_9"/>
<dbReference type="GO" id="GO:0022625">
    <property type="term" value="C:cytosolic large ribosomal subunit"/>
    <property type="evidence" value="ECO:0007669"/>
    <property type="project" value="TreeGrafter"/>
</dbReference>
<dbReference type="GO" id="GO:0003735">
    <property type="term" value="F:structural constituent of ribosome"/>
    <property type="evidence" value="ECO:0007669"/>
    <property type="project" value="InterPro"/>
</dbReference>
<dbReference type="GO" id="GO:0006412">
    <property type="term" value="P:translation"/>
    <property type="evidence" value="ECO:0007669"/>
    <property type="project" value="UniProtKB-UniRule"/>
</dbReference>
<dbReference type="CDD" id="cd01658">
    <property type="entry name" value="Ribosomal_L30"/>
    <property type="match status" value="1"/>
</dbReference>
<dbReference type="FunFam" id="3.30.1390.20:FF:000001">
    <property type="entry name" value="50S ribosomal protein L30"/>
    <property type="match status" value="1"/>
</dbReference>
<dbReference type="Gene3D" id="3.30.1390.20">
    <property type="entry name" value="Ribosomal protein L30, ferredoxin-like fold domain"/>
    <property type="match status" value="1"/>
</dbReference>
<dbReference type="HAMAP" id="MF_01371_B">
    <property type="entry name" value="Ribosomal_uL30_B"/>
    <property type="match status" value="1"/>
</dbReference>
<dbReference type="InterPro" id="IPR036919">
    <property type="entry name" value="Ribo_uL30_ferredoxin-like_sf"/>
</dbReference>
<dbReference type="InterPro" id="IPR005996">
    <property type="entry name" value="Ribosomal_uL30_bac-type"/>
</dbReference>
<dbReference type="InterPro" id="IPR018038">
    <property type="entry name" value="Ribosomal_uL30_CS"/>
</dbReference>
<dbReference type="InterPro" id="IPR016082">
    <property type="entry name" value="Ribosomal_uL30_ferredoxin-like"/>
</dbReference>
<dbReference type="NCBIfam" id="TIGR01308">
    <property type="entry name" value="rpmD_bact"/>
    <property type="match status" value="1"/>
</dbReference>
<dbReference type="PANTHER" id="PTHR15892:SF2">
    <property type="entry name" value="LARGE RIBOSOMAL SUBUNIT PROTEIN UL30M"/>
    <property type="match status" value="1"/>
</dbReference>
<dbReference type="PANTHER" id="PTHR15892">
    <property type="entry name" value="MITOCHONDRIAL RIBOSOMAL PROTEIN L30"/>
    <property type="match status" value="1"/>
</dbReference>
<dbReference type="Pfam" id="PF00327">
    <property type="entry name" value="Ribosomal_L30"/>
    <property type="match status" value="1"/>
</dbReference>
<dbReference type="PIRSF" id="PIRSF002211">
    <property type="entry name" value="Ribosomal_L30_bac-type"/>
    <property type="match status" value="1"/>
</dbReference>
<dbReference type="SUPFAM" id="SSF55129">
    <property type="entry name" value="Ribosomal protein L30p/L7e"/>
    <property type="match status" value="1"/>
</dbReference>
<dbReference type="PROSITE" id="PS00634">
    <property type="entry name" value="RIBOSOMAL_L30"/>
    <property type="match status" value="1"/>
</dbReference>
<name>RL30_LISMC</name>
<evidence type="ECO:0000255" key="1">
    <source>
        <dbReference type="HAMAP-Rule" id="MF_01371"/>
    </source>
</evidence>
<evidence type="ECO:0000305" key="2"/>
<feature type="chain" id="PRO_1000215068" description="Large ribosomal subunit protein uL30">
    <location>
        <begin position="1"/>
        <end position="59"/>
    </location>
</feature>
<protein>
    <recommendedName>
        <fullName evidence="1">Large ribosomal subunit protein uL30</fullName>
    </recommendedName>
    <alternativeName>
        <fullName evidence="2">50S ribosomal protein L30</fullName>
    </alternativeName>
</protein>
<sequence length="59" mass="6493">MAKLEITLKRSLIGRPQPQRKTVQALGLGKTNSVVVKEDNPAIRGMITKVSHLVDVKEV</sequence>
<organism>
    <name type="scientific">Listeria monocytogenes serotype 4b (strain CLIP80459)</name>
    <dbReference type="NCBI Taxonomy" id="568819"/>
    <lineage>
        <taxon>Bacteria</taxon>
        <taxon>Bacillati</taxon>
        <taxon>Bacillota</taxon>
        <taxon>Bacilli</taxon>
        <taxon>Bacillales</taxon>
        <taxon>Listeriaceae</taxon>
        <taxon>Listeria</taxon>
    </lineage>
</organism>
<proteinExistence type="inferred from homology"/>
<gene>
    <name evidence="1" type="primary">rpmD</name>
    <name type="ordered locus">Lm4b_02581</name>
</gene>
<accession>C1KZG2</accession>